<comment type="function">
    <text evidence="1">Catalyzes the reduction of a carbon-carbon double bond in an enoyl moiety that is covalently linked to an acyl carrier protein (ACP). Involved in the elongation cycle of fatty acid which are used in the lipid metabolism (By similarity).</text>
</comment>
<comment type="catalytic activity">
    <reaction>
        <text>a 2,3-saturated acyl-[ACP] + NAD(+) = a (2E)-enoyl-[ACP] + NADH + H(+)</text>
        <dbReference type="Rhea" id="RHEA:10240"/>
        <dbReference type="Rhea" id="RHEA-COMP:9925"/>
        <dbReference type="Rhea" id="RHEA-COMP:9926"/>
        <dbReference type="ChEBI" id="CHEBI:15378"/>
        <dbReference type="ChEBI" id="CHEBI:57540"/>
        <dbReference type="ChEBI" id="CHEBI:57945"/>
        <dbReference type="ChEBI" id="CHEBI:78784"/>
        <dbReference type="ChEBI" id="CHEBI:78785"/>
        <dbReference type="EC" id="1.3.1.9"/>
    </reaction>
</comment>
<comment type="pathway">
    <text>Lipid metabolism; fatty acid biosynthesis.</text>
</comment>
<comment type="subunit">
    <text evidence="1">Homotetramer.</text>
</comment>
<comment type="similarity">
    <text evidence="2">Belongs to the short-chain dehydrogenases/reductases (SDR) family. FabI subfamily.</text>
</comment>
<sequence>MTTGLLQGKKGLITGIANNMSISWAIAQLAKKHGAELWFTYQSGVLEKRVKPLAKEIGCNFVSELDVTKPKSISNLFDDIKEKWGSFDFLLHGMAFADKNELKGRYVDTSLENFHNSLHISCYSLLELSRSAEALMHNGGSIVTLTYYGAEKVIPNYNVMGVAKAALEASIKYLANDMGENNIRVNAISAGPIKTLASSAIGDFSTMLKSHAATAPLKRNTTQEDVGGAAVYLFSELSKGVTGEIHYVDCGYNIMGSTKL</sequence>
<organism>
    <name type="scientific">Rickettsia conorii (strain ATCC VR-613 / Malish 7)</name>
    <dbReference type="NCBI Taxonomy" id="272944"/>
    <lineage>
        <taxon>Bacteria</taxon>
        <taxon>Pseudomonadati</taxon>
        <taxon>Pseudomonadota</taxon>
        <taxon>Alphaproteobacteria</taxon>
        <taxon>Rickettsiales</taxon>
        <taxon>Rickettsiaceae</taxon>
        <taxon>Rickettsieae</taxon>
        <taxon>Rickettsia</taxon>
        <taxon>spotted fever group</taxon>
    </lineage>
</organism>
<proteinExistence type="inferred from homology"/>
<gene>
    <name type="primary">fabI</name>
    <name type="ordered locus">RC0494</name>
</gene>
<reference key="1">
    <citation type="journal article" date="2001" name="Science">
        <title>Mechanisms of evolution in Rickettsia conorii and R. prowazekii.</title>
        <authorList>
            <person name="Ogata H."/>
            <person name="Audic S."/>
            <person name="Renesto-Audiffren P."/>
            <person name="Fournier P.-E."/>
            <person name="Barbe V."/>
            <person name="Samson D."/>
            <person name="Roux V."/>
            <person name="Cossart P."/>
            <person name="Weissenbach J."/>
            <person name="Claverie J.-M."/>
            <person name="Raoult D."/>
        </authorList>
    </citation>
    <scope>NUCLEOTIDE SEQUENCE [LARGE SCALE GENOMIC DNA]</scope>
    <source>
        <strain>ATCC VR-613 / Malish 7</strain>
    </source>
</reference>
<name>FABI_RICCN</name>
<dbReference type="EC" id="1.3.1.9"/>
<dbReference type="EMBL" id="AE006914">
    <property type="protein sequence ID" value="AAL03032.1"/>
    <property type="molecule type" value="Genomic_DNA"/>
</dbReference>
<dbReference type="PIR" id="F97761">
    <property type="entry name" value="F97761"/>
</dbReference>
<dbReference type="RefSeq" id="WP_010977134.1">
    <property type="nucleotide sequence ID" value="NC_003103.1"/>
</dbReference>
<dbReference type="SMR" id="Q92IC6"/>
<dbReference type="GeneID" id="927617"/>
<dbReference type="KEGG" id="rco:RC0494"/>
<dbReference type="PATRIC" id="fig|272944.4.peg.565"/>
<dbReference type="HOGENOM" id="CLU_010194_10_1_5"/>
<dbReference type="UniPathway" id="UPA00094"/>
<dbReference type="Proteomes" id="UP000000816">
    <property type="component" value="Chromosome"/>
</dbReference>
<dbReference type="GO" id="GO:0004318">
    <property type="term" value="F:enoyl-[acyl-carrier-protein] reductase (NADH) activity"/>
    <property type="evidence" value="ECO:0000250"/>
    <property type="project" value="UniProtKB"/>
</dbReference>
<dbReference type="GO" id="GO:0042802">
    <property type="term" value="F:identical protein binding"/>
    <property type="evidence" value="ECO:0000250"/>
    <property type="project" value="UniProtKB"/>
</dbReference>
<dbReference type="GO" id="GO:0030497">
    <property type="term" value="P:fatty acid elongation"/>
    <property type="evidence" value="ECO:0000250"/>
    <property type="project" value="UniProtKB"/>
</dbReference>
<dbReference type="CDD" id="cd05372">
    <property type="entry name" value="ENR_SDR"/>
    <property type="match status" value="1"/>
</dbReference>
<dbReference type="FunFam" id="1.10.8.400:FF:000001">
    <property type="entry name" value="Enoyl-[acyl-carrier-protein] reductase [NADH]"/>
    <property type="match status" value="1"/>
</dbReference>
<dbReference type="FunFam" id="3.40.50.720:FF:000054">
    <property type="entry name" value="Enoyl-[acyl-carrier-protein] reductase [NADH]"/>
    <property type="match status" value="1"/>
</dbReference>
<dbReference type="Gene3D" id="1.10.8.400">
    <property type="entry name" value="Enoyl acyl carrier protein reductase"/>
    <property type="match status" value="1"/>
</dbReference>
<dbReference type="Gene3D" id="3.40.50.720">
    <property type="entry name" value="NAD(P)-binding Rossmann-like Domain"/>
    <property type="match status" value="1"/>
</dbReference>
<dbReference type="InterPro" id="IPR014358">
    <property type="entry name" value="Enoyl-ACP_Rdtase_NADH"/>
</dbReference>
<dbReference type="InterPro" id="IPR036291">
    <property type="entry name" value="NAD(P)-bd_dom_sf"/>
</dbReference>
<dbReference type="InterPro" id="IPR002347">
    <property type="entry name" value="SDR_fam"/>
</dbReference>
<dbReference type="NCBIfam" id="NF005145">
    <property type="entry name" value="PRK06603.1"/>
    <property type="match status" value="1"/>
</dbReference>
<dbReference type="PANTHER" id="PTHR43159">
    <property type="entry name" value="ENOYL-[ACYL-CARRIER-PROTEIN] REDUCTASE"/>
    <property type="match status" value="1"/>
</dbReference>
<dbReference type="PANTHER" id="PTHR43159:SF2">
    <property type="entry name" value="ENOYL-[ACYL-CARRIER-PROTEIN] REDUCTASE [NADH], CHLOROPLASTIC"/>
    <property type="match status" value="1"/>
</dbReference>
<dbReference type="Pfam" id="PF13561">
    <property type="entry name" value="adh_short_C2"/>
    <property type="match status" value="1"/>
</dbReference>
<dbReference type="PIRSF" id="PIRSF000094">
    <property type="entry name" value="Enoyl-ACP_rdct"/>
    <property type="match status" value="1"/>
</dbReference>
<dbReference type="PRINTS" id="PR00081">
    <property type="entry name" value="GDHRDH"/>
</dbReference>
<dbReference type="SUPFAM" id="SSF51735">
    <property type="entry name" value="NAD(P)-binding Rossmann-fold domains"/>
    <property type="match status" value="1"/>
</dbReference>
<feature type="chain" id="PRO_0000054908" description="Enoyl-[acyl-carrier-protein] reductase [NADH] FabI">
    <location>
        <begin position="1"/>
        <end position="260"/>
    </location>
</feature>
<feature type="active site" description="Proton acceptor" evidence="1">
    <location>
        <position position="147"/>
    </location>
</feature>
<feature type="active site" description="Proton acceptor" evidence="1">
    <location>
        <position position="157"/>
    </location>
</feature>
<feature type="binding site" evidence="1">
    <location>
        <position position="15"/>
    </location>
    <ligand>
        <name>NAD(+)</name>
        <dbReference type="ChEBI" id="CHEBI:57540"/>
    </ligand>
</feature>
<feature type="binding site" evidence="1">
    <location>
        <begin position="21"/>
        <end position="22"/>
    </location>
    <ligand>
        <name>NAD(+)</name>
        <dbReference type="ChEBI" id="CHEBI:57540"/>
    </ligand>
</feature>
<feature type="binding site" evidence="1">
    <location>
        <position position="42"/>
    </location>
    <ligand>
        <name>NAD(+)</name>
        <dbReference type="ChEBI" id="CHEBI:57540"/>
    </ligand>
</feature>
<feature type="binding site" evidence="1">
    <location>
        <begin position="66"/>
        <end position="67"/>
    </location>
    <ligand>
        <name>NAD(+)</name>
        <dbReference type="ChEBI" id="CHEBI:57540"/>
    </ligand>
</feature>
<feature type="binding site" evidence="1">
    <location>
        <position position="94"/>
    </location>
    <ligand>
        <name>NAD(+)</name>
        <dbReference type="ChEBI" id="CHEBI:57540"/>
    </ligand>
</feature>
<feature type="binding site" evidence="1">
    <location>
        <position position="97"/>
    </location>
    <ligand>
        <name>substrate</name>
    </ligand>
</feature>
<feature type="binding site" evidence="1">
    <location>
        <position position="164"/>
    </location>
    <ligand>
        <name>NAD(+)</name>
        <dbReference type="ChEBI" id="CHEBI:57540"/>
    </ligand>
</feature>
<feature type="binding site" evidence="1">
    <location>
        <begin position="193"/>
        <end position="197"/>
    </location>
    <ligand>
        <name>NAD(+)</name>
        <dbReference type="ChEBI" id="CHEBI:57540"/>
    </ligand>
</feature>
<evidence type="ECO:0000250" key="1"/>
<evidence type="ECO:0000305" key="2"/>
<protein>
    <recommendedName>
        <fullName>Enoyl-[acyl-carrier-protein] reductase [NADH] FabI</fullName>
        <shortName>ENR</shortName>
        <ecNumber>1.3.1.9</ecNumber>
    </recommendedName>
    <alternativeName>
        <fullName>NADH-dependent enoyl-ACP reductase</fullName>
    </alternativeName>
</protein>
<keyword id="KW-0275">Fatty acid biosynthesis</keyword>
<keyword id="KW-0276">Fatty acid metabolism</keyword>
<keyword id="KW-0444">Lipid biosynthesis</keyword>
<keyword id="KW-0443">Lipid metabolism</keyword>
<keyword id="KW-0520">NAD</keyword>
<keyword id="KW-0560">Oxidoreductase</keyword>
<accession>Q92IC6</accession>